<protein>
    <recommendedName>
        <fullName>Guanine nucleotide-binding protein subunit alpha-11</fullName>
        <shortName>G alpha-11</shortName>
        <shortName>G-protein subunit alpha-11</shortName>
        <ecNumber evidence="3">3.6.5.-</ecNumber>
    </recommendedName>
    <alternativeName>
        <fullName>Guanine nucleotide-binding protein G(y) subunit alpha</fullName>
    </alternativeName>
</protein>
<name>GNA11_HUMAN</name>
<reference key="1">
    <citation type="journal article" date="1991" name="Proc. Natl. Acad. Sci. U.S.A.">
        <title>Guanine nucleotide-binding regulatory proteins in retinal pigment epithelial cells.</title>
        <authorList>
            <person name="Jiang M."/>
            <person name="Pandey S."/>
            <person name="Tran V.T."/>
            <person name="Fong H.K.W."/>
        </authorList>
    </citation>
    <scope>NUCLEOTIDE SEQUENCE [MRNA]</scope>
    <source>
        <tissue>Retina</tissue>
    </source>
</reference>
<reference key="2">
    <citation type="submission" date="1997-07" db="EMBL/GenBank/DDBJ databases">
        <authorList>
            <person name="Bai X.H."/>
            <person name="Acharya R."/>
            <person name="Bai Y.H."/>
            <person name="Murtagh J.J."/>
        </authorList>
    </citation>
    <scope>NUCLEOTIDE SEQUENCE [MRNA]</scope>
</reference>
<reference key="3">
    <citation type="submission" date="2002-03" db="EMBL/GenBank/DDBJ databases">
        <title>cDNA clones of human proteins involved in signal transduction sequenced by the Guthrie cDNA resource center (www.cdna.org).</title>
        <authorList>
            <person name="Puhl H.L. III"/>
            <person name="Ikeda S.R."/>
            <person name="Aronstam R.S."/>
        </authorList>
    </citation>
    <scope>NUCLEOTIDE SEQUENCE [LARGE SCALE MRNA]</scope>
</reference>
<reference key="4">
    <citation type="submission" date="2004-06" db="EMBL/GenBank/DDBJ databases">
        <title>Cloning of human full open reading frames in Gateway(TM) system entry vector (pDONR201).</title>
        <authorList>
            <person name="Ebert L."/>
            <person name="Schick M."/>
            <person name="Neubert P."/>
            <person name="Schatten R."/>
            <person name="Henze S."/>
            <person name="Korn B."/>
        </authorList>
    </citation>
    <scope>NUCLEOTIDE SEQUENCE [LARGE SCALE MRNA]</scope>
</reference>
<reference key="5">
    <citation type="journal article" date="2004" name="Nature">
        <title>The DNA sequence and biology of human chromosome 19.</title>
        <authorList>
            <person name="Grimwood J."/>
            <person name="Gordon L.A."/>
            <person name="Olsen A.S."/>
            <person name="Terry A."/>
            <person name="Schmutz J."/>
            <person name="Lamerdin J.E."/>
            <person name="Hellsten U."/>
            <person name="Goodstein D."/>
            <person name="Couronne O."/>
            <person name="Tran-Gyamfi M."/>
            <person name="Aerts A."/>
            <person name="Altherr M."/>
            <person name="Ashworth L."/>
            <person name="Bajorek E."/>
            <person name="Black S."/>
            <person name="Branscomb E."/>
            <person name="Caenepeel S."/>
            <person name="Carrano A.V."/>
            <person name="Caoile C."/>
            <person name="Chan Y.M."/>
            <person name="Christensen M."/>
            <person name="Cleland C.A."/>
            <person name="Copeland A."/>
            <person name="Dalin E."/>
            <person name="Dehal P."/>
            <person name="Denys M."/>
            <person name="Detter J.C."/>
            <person name="Escobar J."/>
            <person name="Flowers D."/>
            <person name="Fotopulos D."/>
            <person name="Garcia C."/>
            <person name="Georgescu A.M."/>
            <person name="Glavina T."/>
            <person name="Gomez M."/>
            <person name="Gonzales E."/>
            <person name="Groza M."/>
            <person name="Hammon N."/>
            <person name="Hawkins T."/>
            <person name="Haydu L."/>
            <person name="Ho I."/>
            <person name="Huang W."/>
            <person name="Israni S."/>
            <person name="Jett J."/>
            <person name="Kadner K."/>
            <person name="Kimball H."/>
            <person name="Kobayashi A."/>
            <person name="Larionov V."/>
            <person name="Leem S.-H."/>
            <person name="Lopez F."/>
            <person name="Lou Y."/>
            <person name="Lowry S."/>
            <person name="Malfatti S."/>
            <person name="Martinez D."/>
            <person name="McCready P.M."/>
            <person name="Medina C."/>
            <person name="Morgan J."/>
            <person name="Nelson K."/>
            <person name="Nolan M."/>
            <person name="Ovcharenko I."/>
            <person name="Pitluck S."/>
            <person name="Pollard M."/>
            <person name="Popkie A.P."/>
            <person name="Predki P."/>
            <person name="Quan G."/>
            <person name="Ramirez L."/>
            <person name="Rash S."/>
            <person name="Retterer J."/>
            <person name="Rodriguez A."/>
            <person name="Rogers S."/>
            <person name="Salamov A."/>
            <person name="Salazar A."/>
            <person name="She X."/>
            <person name="Smith D."/>
            <person name="Slezak T."/>
            <person name="Solovyev V."/>
            <person name="Thayer N."/>
            <person name="Tice H."/>
            <person name="Tsai M."/>
            <person name="Ustaszewska A."/>
            <person name="Vo N."/>
            <person name="Wagner M."/>
            <person name="Wheeler J."/>
            <person name="Wu K."/>
            <person name="Xie G."/>
            <person name="Yang J."/>
            <person name="Dubchak I."/>
            <person name="Furey T.S."/>
            <person name="DeJong P."/>
            <person name="Dickson M."/>
            <person name="Gordon D."/>
            <person name="Eichler E.E."/>
            <person name="Pennacchio L.A."/>
            <person name="Richardson P."/>
            <person name="Stubbs L."/>
            <person name="Rokhsar D.S."/>
            <person name="Myers R.M."/>
            <person name="Rubin E.M."/>
            <person name="Lucas S.M."/>
        </authorList>
    </citation>
    <scope>NUCLEOTIDE SEQUENCE [LARGE SCALE GENOMIC DNA]</scope>
</reference>
<reference key="6">
    <citation type="journal article" date="2004" name="Genome Res.">
        <title>The status, quality, and expansion of the NIH full-length cDNA project: the Mammalian Gene Collection (MGC).</title>
        <authorList>
            <consortium name="The MGC Project Team"/>
        </authorList>
    </citation>
    <scope>NUCLEOTIDE SEQUENCE [LARGE SCALE MRNA]</scope>
    <source>
        <tissue>Pancreas</tissue>
    </source>
</reference>
<reference key="7">
    <citation type="submission" date="2008-03" db="UniProtKB">
        <authorList>
            <person name="Bienvenut W.V."/>
            <person name="Calvo F."/>
            <person name="Kolch W."/>
        </authorList>
    </citation>
    <scope>PROTEIN SEQUENCE OF 42-52 AND 159-166</scope>
    <scope>IDENTIFICATION BY MASS SPECTROMETRY</scope>
    <source>
        <tissue>Cervix carcinoma</tissue>
    </source>
</reference>
<reference key="8">
    <citation type="journal article" date="1995" name="Biochem. J.">
        <title>Ca2+ signalling in K562 human erythroleukaemia cells: effect of dimethyl sulphoxide and role of G-proteins in thrombin- and thromboxane A2-activated pathways.</title>
        <authorList>
            <person name="Thomas C.P."/>
            <person name="Dunn M.J."/>
            <person name="Mattera R."/>
        </authorList>
    </citation>
    <scope>NUCLEOTIDE SEQUENCE [MRNA] OF 244-337</scope>
    <source>
        <tissue>Hematopoietic</tissue>
    </source>
</reference>
<reference key="9">
    <citation type="journal article" date="2008" name="Biol. Reprod.">
        <title>RGS22, a novel testis-specific regulator of G-protein signaling involved in human and mouse spermiogenesis along with GNA12/13 subunits.</title>
        <authorList>
            <person name="Hu Y."/>
            <person name="Xing J."/>
            <person name="Chen L."/>
            <person name="Guo X."/>
            <person name="Du Y."/>
            <person name="Zhao C."/>
            <person name="Zhu Y."/>
            <person name="Lin M."/>
            <person name="Zhou Z."/>
            <person name="Sha J."/>
        </authorList>
    </citation>
    <scope>INTERACTION WITH RGS22</scope>
    <scope>SUBCELLULAR LOCATION</scope>
    <scope>TISSUE SPECIFICITY</scope>
    <source>
        <tissue>Testis</tissue>
    </source>
</reference>
<reference key="10">
    <citation type="journal article" date="2011" name="BMC Syst. Biol.">
        <title>Initial characterization of the human central proteome.</title>
        <authorList>
            <person name="Burkard T.R."/>
            <person name="Planyavsky M."/>
            <person name="Kaupe I."/>
            <person name="Breitwieser F.P."/>
            <person name="Buerckstuemmer T."/>
            <person name="Bennett K.L."/>
            <person name="Superti-Furga G."/>
            <person name="Colinge J."/>
        </authorList>
    </citation>
    <scope>IDENTIFICATION BY MASS SPECTROMETRY [LARGE SCALE ANALYSIS]</scope>
</reference>
<reference key="11">
    <citation type="journal article" date="2011" name="Cancer Biol. Ther.">
        <title>Neurotensin receptor-1 inducible palmitoylation is required for efficient receptor-mediated mitogenic-signaling within structured membrane microdomains.</title>
        <authorList>
            <person name="Heakal Y."/>
            <person name="Woll M.P."/>
            <person name="Fox T."/>
            <person name="Seaton K."/>
            <person name="Levenson R."/>
            <person name="Kester M."/>
        </authorList>
    </citation>
    <scope>INTERACTION WITH NTSR1</scope>
</reference>
<reference key="12">
    <citation type="journal article" date="2011" name="J. Lipid Res.">
        <title>Site-specific analysis of protein S-acylation by resin-assisted capture.</title>
        <authorList>
            <person name="Forrester M.T."/>
            <person name="Hess D.T."/>
            <person name="Thompson J.W."/>
            <person name="Hultman R."/>
            <person name="Moseley M.A."/>
            <person name="Stamler J.S."/>
            <person name="Casey P.J."/>
        </authorList>
    </citation>
    <scope>PALMITOYLATION AT CYS-9 AND CYS-10</scope>
</reference>
<reference key="13">
    <citation type="journal article" date="2013" name="Nat. Struct. Mol. Biol.">
        <title>A bacterial toxin catalyzing tyrosine glycosylation of Rho and deamidation of Gq and Gi proteins.</title>
        <authorList>
            <person name="Jank T."/>
            <person name="Bogdanovic X."/>
            <person name="Wirth C."/>
            <person name="Haaf E."/>
            <person name="Spoerner M."/>
            <person name="Boehmer K.E."/>
            <person name="Steinemann M."/>
            <person name="Orth J.H."/>
            <person name="Kalbitzer H.R."/>
            <person name="Warscheid B."/>
            <person name="Hunte C."/>
            <person name="Aktories K."/>
        </authorList>
    </citation>
    <scope>DEAMIDATION AT GLN-209 (MICROBIAL INFECTION)</scope>
</reference>
<reference key="14">
    <citation type="journal article" date="2016" name="J. Biol. Chem.">
        <title>Targeted Elimination of G Proteins and Arrestins Defines Their Specific Contributions to Both Intensity and Duration of G Protein-coupled Receptor Signaling.</title>
        <authorList>
            <person name="Alvarez-Curto E."/>
            <person name="Inoue A."/>
            <person name="Jenkins L."/>
            <person name="Raihan S.Z."/>
            <person name="Prihandoko R."/>
            <person name="Tobin A.B."/>
            <person name="Milligan G."/>
        </authorList>
    </citation>
    <scope>FUNCTION</scope>
</reference>
<reference key="15">
    <citation type="journal article" date="2023" name="J. Clin. Invest.">
        <title>The immunometabolite itaconate stimulates OXGR1 to promote mucociliary clearance during the pulmonary innate immune response.</title>
        <authorList>
            <person name="Zeng Y.R."/>
            <person name="Song J.B."/>
            <person name="Wang D."/>
            <person name="Huang Z.X."/>
            <person name="Zhang C."/>
            <person name="Sun Y.P."/>
            <person name="Shu G."/>
            <person name="Xiong Y."/>
            <person name="Guan K.L."/>
            <person name="Ye D."/>
            <person name="Wang P."/>
        </authorList>
    </citation>
    <scope>FUNCTION</scope>
</reference>
<reference key="16">
    <citation type="journal article" date="2013" name="N. Engl. J. Med.">
        <title>A rude awakening--the perioperative sleep apnea epidemic.</title>
        <authorList>
            <person name="Memtsoudis S.G."/>
            <person name="Besculides M.C."/>
            <person name="Mazumdar M."/>
        </authorList>
    </citation>
    <scope>VARIANTS HYPOC2 CYS-60 AND TRP-211</scope>
</reference>
<reference key="17">
    <citation type="journal article" date="2013" name="N. Engl. J. Med.">
        <title>Mutations affecting G-protein subunit alpha11 in hypercalcemia and hypocalcemia.</title>
        <authorList>
            <person name="Nesbit M.A."/>
            <person name="Hannan F.M."/>
            <person name="Howles S.A."/>
            <person name="Babinsky V.N."/>
            <person name="Head R.A."/>
            <person name="Cranston T."/>
            <person name="Rust N."/>
            <person name="Hobbs M.R."/>
            <person name="Heath H. III"/>
            <person name="Thakker R.V."/>
        </authorList>
    </citation>
    <scope>VARIANTS HHC2 GLN-135 AND ILE-200 DEL</scope>
    <scope>VARIANTS HYPOC2 GLN-181 AND LEU-341</scope>
    <scope>CHARACTERIZATION OF VARIANTS HHC2 GLN-135 AND ILE-200 DEL</scope>
    <scope>CHARACTERIZATION OF VARIANTS HYPOC2 GLN-181 AND LEU-341</scope>
</reference>
<reference key="18">
    <citation type="journal article" date="2019" name="Science">
        <title>Structures of the M1 and M2 muscarinic acetylcholine receptor/G-protein complexes.</title>
        <authorList>
            <person name="Maeda S."/>
            <person name="Qu Q."/>
            <person name="Robertson M.J."/>
            <person name="Skiniotis G."/>
            <person name="Kobilka B.K."/>
        </authorList>
    </citation>
    <scope>STRUCTURE BY ELECTRON MICROSCOPY (3.30 ANGSTROMS) OF 36-359</scope>
    <scope>FUNCTION</scope>
</reference>
<reference key="19">
    <citation type="journal article" date="2022" name="Sci. Adv.">
        <title>Atypical structural snapshots of human cytomegalovirus GPCR interactions with host G proteins.</title>
        <authorList>
            <person name="Tsutsumi N."/>
            <person name="Maeda S."/>
            <person name="Qu Q."/>
            <person name="Voegele M."/>
            <person name="Jude K.M."/>
            <person name="Suomivuori C.M."/>
            <person name="Panova O."/>
            <person name="Waghray D."/>
            <person name="Kato H.E."/>
            <person name="Velasco A."/>
            <person name="Dror R.O."/>
            <person name="Skiniotis G."/>
            <person name="Kobilka B.K."/>
            <person name="Garcia K.C."/>
        </authorList>
    </citation>
    <scope>STRUCTURE BY ELECTRON MICROSCOPY (3.50 ANGSTROMS) OF 25-359 IN COMPLEX WITH GDP; GNB1; GNG2; CX3CL1 AND HHV-5 US28</scope>
    <scope>INTERACTION WITH HHV-5 US28 (MICROBIAL INFECTION)</scope>
</reference>
<evidence type="ECO:0000250" key="1">
    <source>
        <dbReference type="UniProtKB" id="P21278"/>
    </source>
</evidence>
<evidence type="ECO:0000250" key="2">
    <source>
        <dbReference type="UniProtKB" id="P27600"/>
    </source>
</evidence>
<evidence type="ECO:0000250" key="3">
    <source>
        <dbReference type="UniProtKB" id="P50148"/>
    </source>
</evidence>
<evidence type="ECO:0000255" key="4">
    <source>
        <dbReference type="PROSITE-ProRule" id="PRU01230"/>
    </source>
</evidence>
<evidence type="ECO:0000269" key="5">
    <source>
    </source>
</evidence>
<evidence type="ECO:0000269" key="6">
    <source>
    </source>
</evidence>
<evidence type="ECO:0000269" key="7">
    <source>
    </source>
</evidence>
<evidence type="ECO:0000269" key="8">
    <source>
    </source>
</evidence>
<evidence type="ECO:0000269" key="9">
    <source>
    </source>
</evidence>
<evidence type="ECO:0000269" key="10">
    <source>
    </source>
</evidence>
<evidence type="ECO:0000269" key="11">
    <source>
    </source>
</evidence>
<evidence type="ECO:0000269" key="12">
    <source>
    </source>
</evidence>
<evidence type="ECO:0000269" key="13">
    <source>
    </source>
</evidence>
<evidence type="ECO:0000269" key="14">
    <source>
    </source>
</evidence>
<evidence type="ECO:0000305" key="15"/>
<evidence type="ECO:0000305" key="16">
    <source>
    </source>
</evidence>
<evidence type="ECO:0000305" key="17">
    <source>
    </source>
</evidence>
<evidence type="ECO:0007829" key="18">
    <source>
        <dbReference type="PDB" id="7XXH"/>
    </source>
</evidence>
<gene>
    <name type="primary">GNA11</name>
    <name type="synonym">GA11</name>
</gene>
<keyword id="KW-0002">3D-structure</keyword>
<keyword id="KW-0013">ADP-ribosylation</keyword>
<keyword id="KW-1003">Cell membrane</keyword>
<keyword id="KW-0963">Cytoplasm</keyword>
<keyword id="KW-0903">Direct protein sequencing</keyword>
<keyword id="KW-0225">Disease variant</keyword>
<keyword id="KW-0342">GTP-binding</keyword>
<keyword id="KW-0945">Host-virus interaction</keyword>
<keyword id="KW-0378">Hydrolase</keyword>
<keyword id="KW-0449">Lipoprotein</keyword>
<keyword id="KW-0460">Magnesium</keyword>
<keyword id="KW-0472">Membrane</keyword>
<keyword id="KW-0479">Metal-binding</keyword>
<keyword id="KW-0547">Nucleotide-binding</keyword>
<keyword id="KW-0564">Palmitate</keyword>
<keyword id="KW-1267">Proteomics identification</keyword>
<keyword id="KW-1185">Reference proteome</keyword>
<keyword id="KW-0807">Transducer</keyword>
<sequence length="359" mass="42123">MTLESMMACCLSDEVKESKRINAEIEKQLRRDKRDARRELKLLLLGTGESGKSTFIKQMRIIHGAGYSEEDKRGFTKLVYQNIFTAMQAMIRAMETLKILYKYEQNKANALLIREVDVEKVTTFEHQYVSAIKTLWEDPGIQECYDRRREYQLSDSAKYYLTDVDRIATLGYLPTQQDVLRVRVPTTGIIEYPFDLENIIFRMVDVGGQRSERRKWIHCFENVTSIMFLVALSEYDQVLVESDNENRMEESKALFRTIITYPWFQNSSVILFLNKKDLLEDKILYSHLVDYFPEFDGPQRDAQAAREFILKMFVDLNPDSDKIIYSHFTCATDTENIRFVFAAVKDTILQLNLKEYNLV</sequence>
<organism>
    <name type="scientific">Homo sapiens</name>
    <name type="common">Human</name>
    <dbReference type="NCBI Taxonomy" id="9606"/>
    <lineage>
        <taxon>Eukaryota</taxon>
        <taxon>Metazoa</taxon>
        <taxon>Chordata</taxon>
        <taxon>Craniata</taxon>
        <taxon>Vertebrata</taxon>
        <taxon>Euteleostomi</taxon>
        <taxon>Mammalia</taxon>
        <taxon>Eutheria</taxon>
        <taxon>Euarchontoglires</taxon>
        <taxon>Primates</taxon>
        <taxon>Haplorrhini</taxon>
        <taxon>Catarrhini</taxon>
        <taxon>Hominidae</taxon>
        <taxon>Homo</taxon>
    </lineage>
</organism>
<dbReference type="EC" id="3.6.5.-" evidence="3"/>
<dbReference type="EMBL" id="M69013">
    <property type="protein sequence ID" value="AAA58624.1"/>
    <property type="molecule type" value="mRNA"/>
</dbReference>
<dbReference type="EMBL" id="AF011497">
    <property type="protein sequence ID" value="AAB64303.1"/>
    <property type="molecule type" value="mRNA"/>
</dbReference>
<dbReference type="EMBL" id="AF493900">
    <property type="protein sequence ID" value="AAM12614.1"/>
    <property type="molecule type" value="mRNA"/>
</dbReference>
<dbReference type="EMBL" id="CR457004">
    <property type="protein sequence ID" value="CAG33285.1"/>
    <property type="molecule type" value="mRNA"/>
</dbReference>
<dbReference type="EMBL" id="AC005262">
    <property type="protein sequence ID" value="AAC25615.1"/>
    <property type="molecule type" value="Genomic_DNA"/>
</dbReference>
<dbReference type="EMBL" id="BC089041">
    <property type="protein sequence ID" value="AAH89041.1"/>
    <property type="molecule type" value="mRNA"/>
</dbReference>
<dbReference type="EMBL" id="BC096225">
    <property type="protein sequence ID" value="AAH96225.1"/>
    <property type="molecule type" value="mRNA"/>
</dbReference>
<dbReference type="EMBL" id="BC096226">
    <property type="protein sequence ID" value="AAH96226.1"/>
    <property type="molecule type" value="mRNA"/>
</dbReference>
<dbReference type="EMBL" id="BC096227">
    <property type="protein sequence ID" value="AAH96227.1"/>
    <property type="molecule type" value="mRNA"/>
</dbReference>
<dbReference type="EMBL" id="L40630">
    <property type="protein sequence ID" value="AAA99949.1"/>
    <property type="molecule type" value="mRNA"/>
</dbReference>
<dbReference type="CCDS" id="CCDS12103.1"/>
<dbReference type="PIR" id="A39394">
    <property type="entry name" value="RGHUGY"/>
</dbReference>
<dbReference type="RefSeq" id="NP_002058.2">
    <property type="nucleotide sequence ID" value="NM_002067.5"/>
</dbReference>
<dbReference type="PDB" id="6OIJ">
    <property type="method" value="EM"/>
    <property type="resolution" value="3.30 A"/>
    <property type="chains" value="A=36-359"/>
</dbReference>
<dbReference type="PDB" id="7RKF">
    <property type="method" value="EM"/>
    <property type="resolution" value="4.00 A"/>
    <property type="chains" value="A=25-359"/>
</dbReference>
<dbReference type="PDB" id="7TRY">
    <property type="method" value="EM"/>
    <property type="resolution" value="3.70 A"/>
    <property type="chains" value="A=25-359"/>
</dbReference>
<dbReference type="PDB" id="7XXH">
    <property type="method" value="EM"/>
    <property type="resolution" value="2.90 A"/>
    <property type="chains" value="A=31-359"/>
</dbReference>
<dbReference type="PDBsum" id="6OIJ"/>
<dbReference type="PDBsum" id="7RKF"/>
<dbReference type="PDBsum" id="7TRY"/>
<dbReference type="PDBsum" id="7XXH"/>
<dbReference type="EMDB" id="EMD-20078"/>
<dbReference type="EMDB" id="EMD-24496"/>
<dbReference type="EMDB" id="EMD-26103"/>
<dbReference type="EMDB" id="EMD-33503"/>
<dbReference type="SMR" id="P29992"/>
<dbReference type="BioGRID" id="109029">
    <property type="interactions" value="108"/>
</dbReference>
<dbReference type="CORUM" id="P29992"/>
<dbReference type="FunCoup" id="P29992">
    <property type="interactions" value="1260"/>
</dbReference>
<dbReference type="IntAct" id="P29992">
    <property type="interactions" value="37"/>
</dbReference>
<dbReference type="MINT" id="P29992"/>
<dbReference type="STRING" id="9606.ENSP00000078429"/>
<dbReference type="BindingDB" id="P29992"/>
<dbReference type="ChEMBL" id="CHEMBL4295740"/>
<dbReference type="TCDB" id="8.A.92.1.5">
    <property type="family name" value="the g-protein AlphaBetaGama complex (gpc) family"/>
</dbReference>
<dbReference type="GlyGen" id="P29992">
    <property type="glycosylation" value="1 site, 1 O-linked glycan (1 site)"/>
</dbReference>
<dbReference type="iPTMnet" id="P29992"/>
<dbReference type="PhosphoSitePlus" id="P29992"/>
<dbReference type="SwissPalm" id="P29992"/>
<dbReference type="BioMuta" id="GNA11"/>
<dbReference type="DMDM" id="3041682"/>
<dbReference type="jPOST" id="P29992"/>
<dbReference type="MassIVE" id="P29992"/>
<dbReference type="PaxDb" id="9606-ENSP00000078429"/>
<dbReference type="PeptideAtlas" id="P29992"/>
<dbReference type="ProteomicsDB" id="54615"/>
<dbReference type="Pumba" id="P29992"/>
<dbReference type="Antibodypedia" id="53288">
    <property type="antibodies" value="259 antibodies from 26 providers"/>
</dbReference>
<dbReference type="DNASU" id="2767"/>
<dbReference type="Ensembl" id="ENST00000078429.9">
    <property type="protein sequence ID" value="ENSP00000078429.3"/>
    <property type="gene ID" value="ENSG00000088256.9"/>
</dbReference>
<dbReference type="GeneID" id="2767"/>
<dbReference type="KEGG" id="hsa:2767"/>
<dbReference type="MANE-Select" id="ENST00000078429.9">
    <property type="protein sequence ID" value="ENSP00000078429.3"/>
    <property type="RefSeq nucleotide sequence ID" value="NM_002067.5"/>
    <property type="RefSeq protein sequence ID" value="NP_002058.2"/>
</dbReference>
<dbReference type="UCSC" id="uc010xhe.5">
    <property type="organism name" value="human"/>
</dbReference>
<dbReference type="AGR" id="HGNC:4379"/>
<dbReference type="CTD" id="2767"/>
<dbReference type="DisGeNET" id="2767"/>
<dbReference type="GeneCards" id="GNA11"/>
<dbReference type="GeneReviews" id="GNA11"/>
<dbReference type="HGNC" id="HGNC:4379">
    <property type="gene designation" value="GNA11"/>
</dbReference>
<dbReference type="HPA" id="ENSG00000088256">
    <property type="expression patterns" value="Low tissue specificity"/>
</dbReference>
<dbReference type="MalaCards" id="GNA11"/>
<dbReference type="MIM" id="139313">
    <property type="type" value="gene"/>
</dbReference>
<dbReference type="MIM" id="145981">
    <property type="type" value="phenotype"/>
</dbReference>
<dbReference type="MIM" id="615361">
    <property type="type" value="phenotype"/>
</dbReference>
<dbReference type="neXtProt" id="NX_P29992"/>
<dbReference type="OpenTargets" id="ENSG00000088256"/>
<dbReference type="Orphanet" id="675359">
    <property type="disease" value="Anastomosing haemangioma"/>
</dbReference>
<dbReference type="Orphanet" id="428">
    <property type="disease" value="Autosomal dominant hypocalcemia"/>
</dbReference>
<dbReference type="Orphanet" id="1556">
    <property type="disease" value="Cutis marmorata telangiectatica congenita"/>
</dbReference>
<dbReference type="Orphanet" id="101049">
    <property type="disease" value="Familial hypocalciuric hypercalcemia type 2"/>
</dbReference>
<dbReference type="Orphanet" id="79483">
    <property type="disease" value="Phakomatosis cesioflammea"/>
</dbReference>
<dbReference type="Orphanet" id="79484">
    <property type="disease" value="Phakomatosis cesiomarmorata"/>
</dbReference>
<dbReference type="Orphanet" id="39044">
    <property type="disease" value="Uveal melanoma"/>
</dbReference>
<dbReference type="PharmGKB" id="PA28764"/>
<dbReference type="VEuPathDB" id="HostDB:ENSG00000088256"/>
<dbReference type="eggNOG" id="KOG0085">
    <property type="taxonomic scope" value="Eukaryota"/>
</dbReference>
<dbReference type="GeneTree" id="ENSGT00940000161033"/>
<dbReference type="HOGENOM" id="CLU_014184_6_0_1"/>
<dbReference type="InParanoid" id="P29992"/>
<dbReference type="OMA" id="GNCISQM"/>
<dbReference type="OrthoDB" id="5817230at2759"/>
<dbReference type="PAN-GO" id="P29992">
    <property type="GO annotations" value="7 GO annotations based on evolutionary models"/>
</dbReference>
<dbReference type="PhylomeDB" id="P29992"/>
<dbReference type="TreeFam" id="TF300673"/>
<dbReference type="PathwayCommons" id="P29992"/>
<dbReference type="Reactome" id="R-HSA-112043">
    <property type="pathway name" value="PLC beta mediated events"/>
</dbReference>
<dbReference type="Reactome" id="R-HSA-202040">
    <property type="pathway name" value="G-protein activation"/>
</dbReference>
<dbReference type="Reactome" id="R-HSA-399997">
    <property type="pathway name" value="Acetylcholine regulates insulin secretion"/>
</dbReference>
<dbReference type="Reactome" id="R-HSA-416476">
    <property type="pathway name" value="G alpha (q) signalling events"/>
</dbReference>
<dbReference type="Reactome" id="R-HSA-418592">
    <property type="pathway name" value="ADP signalling through P2Y purinoceptor 1"/>
</dbReference>
<dbReference type="Reactome" id="R-HSA-428930">
    <property type="pathway name" value="Thromboxane signalling through TP receptor"/>
</dbReference>
<dbReference type="Reactome" id="R-HSA-434316">
    <property type="pathway name" value="Fatty Acids bound to GPR40 (FFAR1) regulate insulin secretion"/>
</dbReference>
<dbReference type="Reactome" id="R-HSA-456926">
    <property type="pathway name" value="Thrombin signalling through proteinase activated receptors (PARs)"/>
</dbReference>
<dbReference type="Reactome" id="R-HSA-6814122">
    <property type="pathway name" value="Cooperation of PDCL (PhLP1) and TRiC/CCT in G-protein beta folding"/>
</dbReference>
<dbReference type="Reactome" id="R-HSA-9856530">
    <property type="pathway name" value="High laminar flow shear stress activates signaling by PIEZO1 and PECAM1:CDH5:KDR in endothelial cells"/>
</dbReference>
<dbReference type="Reactome" id="R-HSA-9860927">
    <property type="pathway name" value="Turbulent (oscillatory, disturbed) flow shear stress activates signaling by PIEZO1 and integrins in endothelial cells"/>
</dbReference>
<dbReference type="SignaLink" id="P29992"/>
<dbReference type="SIGNOR" id="P29992"/>
<dbReference type="BioGRID-ORCS" id="2767">
    <property type="hits" value="36 hits in 1169 CRISPR screens"/>
</dbReference>
<dbReference type="CD-CODE" id="FB4E32DD">
    <property type="entry name" value="Presynaptic clusters and postsynaptic densities"/>
</dbReference>
<dbReference type="ChiTaRS" id="GNA11">
    <property type="organism name" value="human"/>
</dbReference>
<dbReference type="GeneWiki" id="GNA11"/>
<dbReference type="GenomeRNAi" id="2767"/>
<dbReference type="Pharos" id="P29992">
    <property type="development level" value="Tchem"/>
</dbReference>
<dbReference type="PRO" id="PR:P29992"/>
<dbReference type="Proteomes" id="UP000005640">
    <property type="component" value="Chromosome 19"/>
</dbReference>
<dbReference type="RNAct" id="P29992">
    <property type="molecule type" value="protein"/>
</dbReference>
<dbReference type="Bgee" id="ENSG00000088256">
    <property type="expression patterns" value="Expressed in ileal mucosa and 209 other cell types or tissues"/>
</dbReference>
<dbReference type="ExpressionAtlas" id="P29992">
    <property type="expression patterns" value="baseline and differential"/>
</dbReference>
<dbReference type="GO" id="GO:0005737">
    <property type="term" value="C:cytoplasm"/>
    <property type="evidence" value="ECO:0000314"/>
    <property type="project" value="UniProtKB"/>
</dbReference>
<dbReference type="GO" id="GO:0070062">
    <property type="term" value="C:extracellular exosome"/>
    <property type="evidence" value="ECO:0007005"/>
    <property type="project" value="UniProtKB"/>
</dbReference>
<dbReference type="GO" id="GO:0005834">
    <property type="term" value="C:heterotrimeric G-protein complex"/>
    <property type="evidence" value="ECO:0000318"/>
    <property type="project" value="GO_Central"/>
</dbReference>
<dbReference type="GO" id="GO:0005765">
    <property type="term" value="C:lysosomal membrane"/>
    <property type="evidence" value="ECO:0007005"/>
    <property type="project" value="UniProtKB"/>
</dbReference>
<dbReference type="GO" id="GO:0001750">
    <property type="term" value="C:photoreceptor outer segment"/>
    <property type="evidence" value="ECO:0000250"/>
    <property type="project" value="AgBase"/>
</dbReference>
<dbReference type="GO" id="GO:0005886">
    <property type="term" value="C:plasma membrane"/>
    <property type="evidence" value="ECO:0000314"/>
    <property type="project" value="UniProt"/>
</dbReference>
<dbReference type="GO" id="GO:0045202">
    <property type="term" value="C:synapse"/>
    <property type="evidence" value="ECO:0007669"/>
    <property type="project" value="GOC"/>
</dbReference>
<dbReference type="GO" id="GO:0030234">
    <property type="term" value="F:enzyme regulator activity"/>
    <property type="evidence" value="ECO:0000314"/>
    <property type="project" value="UniProt"/>
</dbReference>
<dbReference type="GO" id="GO:0003925">
    <property type="term" value="F:G protein activity"/>
    <property type="evidence" value="ECO:0000314"/>
    <property type="project" value="UniProt"/>
</dbReference>
<dbReference type="GO" id="GO:0001664">
    <property type="term" value="F:G protein-coupled receptor binding"/>
    <property type="evidence" value="ECO:0000318"/>
    <property type="project" value="GO_Central"/>
</dbReference>
<dbReference type="GO" id="GO:0031683">
    <property type="term" value="F:G-protein beta/gamma-subunit complex binding"/>
    <property type="evidence" value="ECO:0000318"/>
    <property type="project" value="GO_Central"/>
</dbReference>
<dbReference type="GO" id="GO:0005525">
    <property type="term" value="F:GTP binding"/>
    <property type="evidence" value="ECO:0000304"/>
    <property type="project" value="Reactome"/>
</dbReference>
<dbReference type="GO" id="GO:0003924">
    <property type="term" value="F:GTPase activity"/>
    <property type="evidence" value="ECO:0000318"/>
    <property type="project" value="GO_Central"/>
</dbReference>
<dbReference type="GO" id="GO:0046872">
    <property type="term" value="F:metal ion binding"/>
    <property type="evidence" value="ECO:0007669"/>
    <property type="project" value="UniProtKB-KW"/>
</dbReference>
<dbReference type="GO" id="GO:0001508">
    <property type="term" value="P:action potential"/>
    <property type="evidence" value="ECO:0000318"/>
    <property type="project" value="GO_Central"/>
</dbReference>
<dbReference type="GO" id="GO:0007188">
    <property type="term" value="P:adenylate cyclase-modulating G protein-coupled receptor signaling pathway"/>
    <property type="evidence" value="ECO:0000318"/>
    <property type="project" value="GO_Central"/>
</dbReference>
<dbReference type="GO" id="GO:0071467">
    <property type="term" value="P:cellular response to pH"/>
    <property type="evidence" value="ECO:0007669"/>
    <property type="project" value="Ensembl"/>
</dbReference>
<dbReference type="GO" id="GO:1904888">
    <property type="term" value="P:cranial skeletal system development"/>
    <property type="evidence" value="ECO:0007669"/>
    <property type="project" value="Ensembl"/>
</dbReference>
<dbReference type="GO" id="GO:0048066">
    <property type="term" value="P:developmental pigmentation"/>
    <property type="evidence" value="ECO:0007669"/>
    <property type="project" value="Ensembl"/>
</dbReference>
<dbReference type="GO" id="GO:0086100">
    <property type="term" value="P:endothelin receptor signaling pathway"/>
    <property type="evidence" value="ECO:0007669"/>
    <property type="project" value="Ensembl"/>
</dbReference>
<dbReference type="GO" id="GO:0009649">
    <property type="term" value="P:entrainment of circadian clock"/>
    <property type="evidence" value="ECO:0000250"/>
    <property type="project" value="AgBase"/>
</dbReference>
<dbReference type="GO" id="GO:0007213">
    <property type="term" value="P:G protein-coupled acetylcholine receptor signaling pathway"/>
    <property type="evidence" value="ECO:0000250"/>
    <property type="project" value="AgBase"/>
</dbReference>
<dbReference type="GO" id="GO:0007507">
    <property type="term" value="P:heart development"/>
    <property type="evidence" value="ECO:0007669"/>
    <property type="project" value="Ensembl"/>
</dbReference>
<dbReference type="GO" id="GO:1990806">
    <property type="term" value="P:ligand-gated ion channel signaling pathway"/>
    <property type="evidence" value="ECO:0007669"/>
    <property type="project" value="Ensembl"/>
</dbReference>
<dbReference type="GO" id="GO:0060158">
    <property type="term" value="P:phospholipase C-activating dopamine receptor signaling pathway"/>
    <property type="evidence" value="ECO:0000318"/>
    <property type="project" value="GO_Central"/>
</dbReference>
<dbReference type="GO" id="GO:0007207">
    <property type="term" value="P:phospholipase C-activating G protein-coupled acetylcholine receptor signaling pathway"/>
    <property type="evidence" value="ECO:0007669"/>
    <property type="project" value="Ensembl"/>
</dbReference>
<dbReference type="GO" id="GO:0007200">
    <property type="term" value="P:phospholipase C-activating G protein-coupled receptor signaling pathway"/>
    <property type="evidence" value="ECO:0000314"/>
    <property type="project" value="UniProt"/>
</dbReference>
<dbReference type="GO" id="GO:0007603">
    <property type="term" value="P:phototransduction, visible light"/>
    <property type="evidence" value="ECO:0000250"/>
    <property type="project" value="AgBase"/>
</dbReference>
<dbReference type="GO" id="GO:0032024">
    <property type="term" value="P:positive regulation of insulin secretion"/>
    <property type="evidence" value="ECO:0007669"/>
    <property type="project" value="Ensembl"/>
</dbReference>
<dbReference type="GO" id="GO:0008217">
    <property type="term" value="P:regulation of blood pressure"/>
    <property type="evidence" value="ECO:0007669"/>
    <property type="project" value="Ensembl"/>
</dbReference>
<dbReference type="GO" id="GO:0045634">
    <property type="term" value="P:regulation of melanocyte differentiation"/>
    <property type="evidence" value="ECO:0007669"/>
    <property type="project" value="Ensembl"/>
</dbReference>
<dbReference type="GO" id="GO:0007165">
    <property type="term" value="P:signal transduction"/>
    <property type="evidence" value="ECO:0000304"/>
    <property type="project" value="ProtInc"/>
</dbReference>
<dbReference type="GO" id="GO:0001501">
    <property type="term" value="P:skeletal system development"/>
    <property type="evidence" value="ECO:0007669"/>
    <property type="project" value="Ensembl"/>
</dbReference>
<dbReference type="CDD" id="cd00066">
    <property type="entry name" value="G-alpha"/>
    <property type="match status" value="1"/>
</dbReference>
<dbReference type="FunFam" id="3.40.50.300:FF:003977">
    <property type="entry name" value="Guanine nucleotide-binding protein G(q) subunit alpha"/>
    <property type="match status" value="1"/>
</dbReference>
<dbReference type="FunFam" id="1.10.400.10:FF:000002">
    <property type="entry name" value="guanine nucleotide-binding protein G(Q) subunit alpha"/>
    <property type="match status" value="1"/>
</dbReference>
<dbReference type="FunFam" id="3.40.50.300:FF:000692">
    <property type="entry name" value="Guanine nucleotide-binding protein subunit alpha"/>
    <property type="match status" value="1"/>
</dbReference>
<dbReference type="Gene3D" id="1.10.400.10">
    <property type="entry name" value="GI Alpha 1, domain 2-like"/>
    <property type="match status" value="1"/>
</dbReference>
<dbReference type="Gene3D" id="3.40.50.300">
    <property type="entry name" value="P-loop containing nucleotide triphosphate hydrolases"/>
    <property type="match status" value="1"/>
</dbReference>
<dbReference type="InterPro" id="IPR000654">
    <property type="entry name" value="Gprotein_alpha_Q"/>
</dbReference>
<dbReference type="InterPro" id="IPR001019">
    <property type="entry name" value="Gprotein_alpha_su"/>
</dbReference>
<dbReference type="InterPro" id="IPR011025">
    <property type="entry name" value="GproteinA_insert"/>
</dbReference>
<dbReference type="InterPro" id="IPR027417">
    <property type="entry name" value="P-loop_NTPase"/>
</dbReference>
<dbReference type="PANTHER" id="PTHR10218">
    <property type="entry name" value="GTP-BINDING PROTEIN ALPHA SUBUNIT"/>
    <property type="match status" value="1"/>
</dbReference>
<dbReference type="PANTHER" id="PTHR10218:SF328">
    <property type="entry name" value="GUANINE NUCLEOTIDE-BINDING PROTEIN SUBUNIT ALPHA-11"/>
    <property type="match status" value="1"/>
</dbReference>
<dbReference type="Pfam" id="PF00503">
    <property type="entry name" value="G-alpha"/>
    <property type="match status" value="1"/>
</dbReference>
<dbReference type="PRINTS" id="PR00318">
    <property type="entry name" value="GPROTEINA"/>
</dbReference>
<dbReference type="PRINTS" id="PR00442">
    <property type="entry name" value="GPROTEINAQ"/>
</dbReference>
<dbReference type="SMART" id="SM00275">
    <property type="entry name" value="G_alpha"/>
    <property type="match status" value="1"/>
</dbReference>
<dbReference type="SUPFAM" id="SSF52540">
    <property type="entry name" value="P-loop containing nucleoside triphosphate hydrolases"/>
    <property type="match status" value="1"/>
</dbReference>
<dbReference type="SUPFAM" id="SSF47895">
    <property type="entry name" value="Transducin (alpha subunit), insertion domain"/>
    <property type="match status" value="1"/>
</dbReference>
<dbReference type="PROSITE" id="PS51882">
    <property type="entry name" value="G_ALPHA"/>
    <property type="match status" value="1"/>
</dbReference>
<proteinExistence type="evidence at protein level"/>
<comment type="function">
    <text evidence="1 11 12 14">Guanine nucleotide-binding proteins (G proteins) function as transducers downstream of G protein-coupled receptors (GPCRs) in numerous signaling cascades (PubMed:31073061). The alpha chain contains the guanine nucleotide binding site and alternates between an active, GTP-bound state and an inactive, GDP-bound state (PubMed:31073061). Signaling by an activated GPCR promotes GDP release and GTP binding (PubMed:31073061). The alpha subunit has a low GTPase activity that converts bound GTP to GDP, thereby terminating the signal (PubMed:31073061). Both GDP release and GTP hydrolysis are modulated by numerous regulatory proteins (PubMed:31073061). Signaling is mediated via phospholipase C-beta-dependent inositol lipid hydrolysis for signal propagation: activates phospholipase C-beta: following GPCR activation, GNA11 activates PLC-beta (PLCB1, PLCB2, PLCB3 or PLCB4), leading to production of diacylglycerol (DAG) and inositol 1,4,5-trisphosphate (IP3) (PubMed:31073061). Transduces FFAR4 signaling in response to long-chain fatty acids (LCFAs) (PubMed:27852822). Together with GNAQ, required for heart development (By similarity). In the respiratory epithelium, transmits OXGR1-dependent signals that lead to downstream intracellular Ca(2+) release and mucocilliary clearance of airborne pathogens.</text>
</comment>
<comment type="catalytic activity">
    <reaction evidence="3">
        <text>GTP + H2O = GDP + phosphate + H(+)</text>
        <dbReference type="Rhea" id="RHEA:19669"/>
        <dbReference type="ChEBI" id="CHEBI:15377"/>
        <dbReference type="ChEBI" id="CHEBI:15378"/>
        <dbReference type="ChEBI" id="CHEBI:37565"/>
        <dbReference type="ChEBI" id="CHEBI:43474"/>
        <dbReference type="ChEBI" id="CHEBI:58189"/>
    </reaction>
    <physiologicalReaction direction="left-to-right" evidence="3">
        <dbReference type="Rhea" id="RHEA:19670"/>
    </physiologicalReaction>
</comment>
<comment type="subunit">
    <text evidence="5 7 13">G proteins are composed of 3 units; alpha, beta and gamma. The alpha chain contains the guanine nucleotide binding site (PubMed:35061538). Interacts with RGS22 (PubMed:18703424). Interacts with NTSR1 (PubMed:21725197).</text>
</comment>
<comment type="subunit">
    <text evidence="13">(Microbial infection) Interacts with human cytomegalovirus (HHV-5) US28.</text>
</comment>
<comment type="subcellular location">
    <subcellularLocation>
        <location evidence="16">Cell membrane</location>
        <topology evidence="16">Lipid-anchor</topology>
    </subcellularLocation>
    <subcellularLocation>
        <location evidence="5">Cytoplasm</location>
    </subcellularLocation>
    <text evidence="5">In testicular cells, expressed exclusively in the cytoplasm.</text>
</comment>
<comment type="tissue specificity">
    <text evidence="5">Expressed in testis.</text>
</comment>
<comment type="PTM">
    <text evidence="10">(Microbial infection) Deamidated at Gln-209 by Photorhabdus asymbiotica toxin PAU_02230, blocking GTP hydrolysis of heterotrimeric GNAQ or GNA11 and G-alphai (GNAI1, GNAI2 or GNAI3) proteins, thereby activating RhoA.</text>
</comment>
<comment type="disease" evidence="9">
    <disease id="DI-03852">
        <name>Hypocalciuric hypercalcemia, familial 2</name>
        <acronym>HHC2</acronym>
        <description>A form of hypocalciuric hypercalcemia, a disorder of mineral homeostasis that is transmitted as an autosomal dominant trait with a high degree of penetrance. It is characterized biochemically by lifelong elevation of serum calcium concentrations and is associated with inappropriately low urinary calcium excretion and a normal or mildly elevated circulating parathyroid hormone level. Hypermagnesemia is typically present. Affected individuals are usually asymptomatic and the disorder is considered benign. However, chondrocalcinosis and pancreatitis occur in some adults.</description>
        <dbReference type="MIM" id="145981"/>
    </disease>
    <text>The disease is caused by variants affecting the gene represented in this entry.</text>
</comment>
<comment type="disease" evidence="8 9">
    <disease id="DI-03851">
        <name>Hypocalcemia, autosomal dominant 2</name>
        <acronym>HYPOC2</acronym>
        <description>A form of hypocalcemia, a disorder of mineral homeostasis characterized by blood calcium levels below normal, and low or normal serum parathyroid hormone concentrations. Disease manifestations include hypocalcemia, paresthesias, carpopedal spasm, seizures, hypercalciuria with nephrocalcinosis or kidney stones, and ectopic and basal ganglia calcifications.</description>
        <dbReference type="MIM" id="615361"/>
    </disease>
    <text>The disease is caused by variants affecting the gene represented in this entry.</text>
</comment>
<comment type="similarity">
    <text evidence="15">Belongs to the G-alpha family. G(q) subfamily.</text>
</comment>
<comment type="online information" name="Atlas of Genetics and Cytogenetics in Oncology and Haematology">
    <link uri="https://atlasgeneticsoncology.org/gene/43272/GNA11"/>
</comment>
<accession>P29992</accession>
<accession>O15109</accession>
<accession>Q14350</accession>
<accession>Q6IB00</accession>
<feature type="chain" id="PRO_0000203746" description="Guanine nucleotide-binding protein subunit alpha-11">
    <location>
        <begin position="1"/>
        <end position="359"/>
    </location>
</feature>
<feature type="domain" description="G-alpha" evidence="4">
    <location>
        <begin position="38"/>
        <end position="359"/>
    </location>
</feature>
<feature type="region of interest" description="G1 motif" evidence="4">
    <location>
        <begin position="41"/>
        <end position="54"/>
    </location>
</feature>
<feature type="region of interest" description="G2 motif" evidence="4">
    <location>
        <begin position="178"/>
        <end position="186"/>
    </location>
</feature>
<feature type="region of interest" description="G3 motif" evidence="4">
    <location>
        <begin position="201"/>
        <end position="210"/>
    </location>
</feature>
<feature type="region of interest" description="G4 motif" evidence="4">
    <location>
        <begin position="270"/>
        <end position="277"/>
    </location>
</feature>
<feature type="region of interest" description="G5 motif" evidence="4">
    <location>
        <begin position="329"/>
        <end position="334"/>
    </location>
</feature>
<feature type="binding site" evidence="17">
    <location>
        <begin position="46"/>
        <end position="53"/>
    </location>
    <ligand>
        <name>GTP</name>
        <dbReference type="ChEBI" id="CHEBI:37565"/>
    </ligand>
</feature>
<feature type="binding site" evidence="2">
    <location>
        <position position="53"/>
    </location>
    <ligand>
        <name>Mg(2+)</name>
        <dbReference type="ChEBI" id="CHEBI:18420"/>
    </ligand>
</feature>
<feature type="binding site" evidence="2">
    <location>
        <begin position="180"/>
        <end position="183"/>
    </location>
    <ligand>
        <name>GTP</name>
        <dbReference type="ChEBI" id="CHEBI:37565"/>
    </ligand>
</feature>
<feature type="binding site" evidence="2">
    <location>
        <position position="186"/>
    </location>
    <ligand>
        <name>Mg(2+)</name>
        <dbReference type="ChEBI" id="CHEBI:18420"/>
    </ligand>
</feature>
<feature type="binding site" evidence="2">
    <location>
        <begin position="274"/>
        <end position="277"/>
    </location>
    <ligand>
        <name>GTP</name>
        <dbReference type="ChEBI" id="CHEBI:37565"/>
    </ligand>
</feature>
<feature type="binding site" evidence="2">
    <location>
        <position position="331"/>
    </location>
    <ligand>
        <name>GTP</name>
        <dbReference type="ChEBI" id="CHEBI:37565"/>
    </ligand>
</feature>
<feature type="modified residue" description="Deamidated glutamine; by Photorhabdus PAU_02230" evidence="10">
    <location>
        <position position="209"/>
    </location>
</feature>
<feature type="lipid moiety-binding region" description="S-palmitoyl cysteine" evidence="6">
    <location>
        <position position="9"/>
    </location>
</feature>
<feature type="lipid moiety-binding region" description="S-palmitoyl cysteine" evidence="6">
    <location>
        <position position="10"/>
    </location>
</feature>
<feature type="sequence variant" id="VAR_070165" description="In HYPOC2; dbSNP:rs587777021." evidence="8">
    <original>R</original>
    <variation>C</variation>
    <location>
        <position position="60"/>
    </location>
</feature>
<feature type="sequence variant" id="VAR_070166" description="In HHC2; induces a decrease in sensitivity to changes in extracellular calcium concentrations; dbSNP:rs587777019." evidence="9">
    <original>L</original>
    <variation>Q</variation>
    <location>
        <position position="135"/>
    </location>
</feature>
<feature type="sequence variant" id="VAR_070167" description="In HYPOC2; induces an increase in sensitivity to changes in extracellular calcium concentrations; dbSNP:rs587777020." evidence="9">
    <original>R</original>
    <variation>Q</variation>
    <location>
        <position position="181"/>
    </location>
</feature>
<feature type="sequence variant" id="VAR_070168" description="In HHC2; induces a decrease in sensitivity to changes in extracellular calcium concentrations; dbSNP:rs672601249." evidence="9">
    <location>
        <position position="200"/>
    </location>
</feature>
<feature type="sequence variant" id="VAR_070169" description="In HYPOC2; dbSNP:rs587777022." evidence="8">
    <original>S</original>
    <variation>W</variation>
    <location>
        <position position="211"/>
    </location>
</feature>
<feature type="sequence variant" id="VAR_070170" description="In HYPOC2; induces an increase in sensitivity to changes in extracellular calcium concentrations; dbSNP:rs140749796." evidence="9">
    <original>F</original>
    <variation>L</variation>
    <location>
        <position position="341"/>
    </location>
</feature>
<feature type="sequence conflict" description="In Ref. 2; AAB64303." evidence="15" ref="2">
    <original>M</original>
    <variation>I</variation>
    <location>
        <position position="6"/>
    </location>
</feature>
<feature type="sequence conflict" description="In Ref. 8; AAA99949." evidence="15" ref="8">
    <original>N</original>
    <variation>H</variation>
    <location>
        <position position="266"/>
    </location>
</feature>
<feature type="sequence conflict" description="In Ref. 8; AAA99949." evidence="15" ref="8">
    <original>Y</original>
    <variation>H</variation>
    <location>
        <position position="285"/>
    </location>
</feature>
<feature type="sequence conflict" description="In Ref. 1; AAA58624." evidence="15" ref="1">
    <original>DA</original>
    <variation>EP</variation>
    <location>
        <begin position="301"/>
        <end position="302"/>
    </location>
</feature>
<feature type="sequence conflict" description="In Ref. 2; AAB64303." evidence="15" ref="2">
    <original>L</original>
    <variation>P</variation>
    <location>
        <position position="310"/>
    </location>
</feature>
<feature type="helix" evidence="18">
    <location>
        <begin position="31"/>
        <end position="36"/>
    </location>
</feature>
<feature type="strand" evidence="18">
    <location>
        <begin position="39"/>
        <end position="46"/>
    </location>
</feature>
<feature type="helix" evidence="18">
    <location>
        <begin position="48"/>
        <end position="50"/>
    </location>
</feature>
<feature type="helix" evidence="18">
    <location>
        <begin position="52"/>
        <end position="63"/>
    </location>
</feature>
<feature type="strand" evidence="18">
    <location>
        <begin position="194"/>
        <end position="196"/>
    </location>
</feature>
<feature type="strand" evidence="18">
    <location>
        <begin position="199"/>
        <end position="205"/>
    </location>
</feature>
<feature type="strand" evidence="18">
    <location>
        <begin position="213"/>
        <end position="216"/>
    </location>
</feature>
<feature type="helix" evidence="18">
    <location>
        <begin position="217"/>
        <end position="220"/>
    </location>
</feature>
<feature type="strand" evidence="18">
    <location>
        <begin position="224"/>
        <end position="231"/>
    </location>
</feature>
<feature type="helix" evidence="18">
    <location>
        <begin position="247"/>
        <end position="259"/>
    </location>
</feature>
<feature type="strand" evidence="18">
    <location>
        <begin position="268"/>
        <end position="274"/>
    </location>
</feature>
<feature type="helix" evidence="18">
    <location>
        <begin position="276"/>
        <end position="282"/>
    </location>
</feature>
<feature type="turn" evidence="18">
    <location>
        <begin position="283"/>
        <end position="285"/>
    </location>
</feature>
<feature type="turn" evidence="18">
    <location>
        <begin position="288"/>
        <end position="291"/>
    </location>
</feature>
<feature type="helix" evidence="18">
    <location>
        <begin position="304"/>
        <end position="314"/>
    </location>
</feature>
<feature type="strand" evidence="18">
    <location>
        <begin position="324"/>
        <end position="328"/>
    </location>
</feature>
<feature type="helix" evidence="18">
    <location>
        <begin position="336"/>
        <end position="355"/>
    </location>
</feature>